<sequence>MSERNDRKVYVGKVVSDKMDKTITVLVETYKTHKLYGKRVKYSKKYKTHDENNSAKLGDIVKIQETRPLSATKRFRLVEIVEESVII</sequence>
<accession>Q5HDW7</accession>
<feature type="chain" id="PRO_0000128478" description="Small ribosomal subunit protein uS17">
    <location>
        <begin position="1"/>
        <end position="87"/>
    </location>
</feature>
<keyword id="KW-0687">Ribonucleoprotein</keyword>
<keyword id="KW-0689">Ribosomal protein</keyword>
<keyword id="KW-0694">RNA-binding</keyword>
<keyword id="KW-0699">rRNA-binding</keyword>
<name>RS17_STAAC</name>
<comment type="function">
    <text evidence="1">One of the primary rRNA binding proteins, it binds specifically to the 5'-end of 16S ribosomal RNA.</text>
</comment>
<comment type="subunit">
    <text evidence="1">Part of the 30S ribosomal subunit.</text>
</comment>
<comment type="similarity">
    <text evidence="1">Belongs to the universal ribosomal protein uS17 family.</text>
</comment>
<gene>
    <name evidence="1" type="primary">rpsQ</name>
    <name type="ordered locus">SACOL2230</name>
</gene>
<dbReference type="EMBL" id="CP000046">
    <property type="protein sequence ID" value="AAW37105.1"/>
    <property type="molecule type" value="Genomic_DNA"/>
</dbReference>
<dbReference type="RefSeq" id="WP_000004086.1">
    <property type="nucleotide sequence ID" value="NZ_JBGOFO010000004.1"/>
</dbReference>
<dbReference type="SMR" id="Q5HDW7"/>
<dbReference type="GeneID" id="98346553"/>
<dbReference type="KEGG" id="sac:SACOL2230"/>
<dbReference type="HOGENOM" id="CLU_073626_1_0_9"/>
<dbReference type="Proteomes" id="UP000000530">
    <property type="component" value="Chromosome"/>
</dbReference>
<dbReference type="GO" id="GO:0022627">
    <property type="term" value="C:cytosolic small ribosomal subunit"/>
    <property type="evidence" value="ECO:0007669"/>
    <property type="project" value="TreeGrafter"/>
</dbReference>
<dbReference type="GO" id="GO:0019843">
    <property type="term" value="F:rRNA binding"/>
    <property type="evidence" value="ECO:0007669"/>
    <property type="project" value="UniProtKB-UniRule"/>
</dbReference>
<dbReference type="GO" id="GO:0003735">
    <property type="term" value="F:structural constituent of ribosome"/>
    <property type="evidence" value="ECO:0007669"/>
    <property type="project" value="InterPro"/>
</dbReference>
<dbReference type="GO" id="GO:0006412">
    <property type="term" value="P:translation"/>
    <property type="evidence" value="ECO:0007669"/>
    <property type="project" value="UniProtKB-UniRule"/>
</dbReference>
<dbReference type="CDD" id="cd00364">
    <property type="entry name" value="Ribosomal_uS17"/>
    <property type="match status" value="1"/>
</dbReference>
<dbReference type="FunFam" id="2.40.50.140:FF:000026">
    <property type="entry name" value="30S ribosomal protein S17"/>
    <property type="match status" value="1"/>
</dbReference>
<dbReference type="Gene3D" id="2.40.50.140">
    <property type="entry name" value="Nucleic acid-binding proteins"/>
    <property type="match status" value="1"/>
</dbReference>
<dbReference type="HAMAP" id="MF_01345_B">
    <property type="entry name" value="Ribosomal_uS17_B"/>
    <property type="match status" value="1"/>
</dbReference>
<dbReference type="InterPro" id="IPR012340">
    <property type="entry name" value="NA-bd_OB-fold"/>
</dbReference>
<dbReference type="InterPro" id="IPR000266">
    <property type="entry name" value="Ribosomal_uS17"/>
</dbReference>
<dbReference type="InterPro" id="IPR019984">
    <property type="entry name" value="Ribosomal_uS17_bact/chlr"/>
</dbReference>
<dbReference type="InterPro" id="IPR019979">
    <property type="entry name" value="Ribosomal_uS17_CS"/>
</dbReference>
<dbReference type="NCBIfam" id="NF004123">
    <property type="entry name" value="PRK05610.1"/>
    <property type="match status" value="1"/>
</dbReference>
<dbReference type="NCBIfam" id="TIGR03635">
    <property type="entry name" value="uS17_bact"/>
    <property type="match status" value="1"/>
</dbReference>
<dbReference type="PANTHER" id="PTHR10744">
    <property type="entry name" value="40S RIBOSOMAL PROTEIN S11 FAMILY MEMBER"/>
    <property type="match status" value="1"/>
</dbReference>
<dbReference type="PANTHER" id="PTHR10744:SF1">
    <property type="entry name" value="SMALL RIBOSOMAL SUBUNIT PROTEIN US17M"/>
    <property type="match status" value="1"/>
</dbReference>
<dbReference type="Pfam" id="PF00366">
    <property type="entry name" value="Ribosomal_S17"/>
    <property type="match status" value="1"/>
</dbReference>
<dbReference type="PRINTS" id="PR00973">
    <property type="entry name" value="RIBOSOMALS17"/>
</dbReference>
<dbReference type="SUPFAM" id="SSF50249">
    <property type="entry name" value="Nucleic acid-binding proteins"/>
    <property type="match status" value="1"/>
</dbReference>
<dbReference type="PROSITE" id="PS00056">
    <property type="entry name" value="RIBOSOMAL_S17"/>
    <property type="match status" value="1"/>
</dbReference>
<organism>
    <name type="scientific">Staphylococcus aureus (strain COL)</name>
    <dbReference type="NCBI Taxonomy" id="93062"/>
    <lineage>
        <taxon>Bacteria</taxon>
        <taxon>Bacillati</taxon>
        <taxon>Bacillota</taxon>
        <taxon>Bacilli</taxon>
        <taxon>Bacillales</taxon>
        <taxon>Staphylococcaceae</taxon>
        <taxon>Staphylococcus</taxon>
    </lineage>
</organism>
<evidence type="ECO:0000255" key="1">
    <source>
        <dbReference type="HAMAP-Rule" id="MF_01345"/>
    </source>
</evidence>
<evidence type="ECO:0000305" key="2"/>
<proteinExistence type="inferred from homology"/>
<protein>
    <recommendedName>
        <fullName evidence="1">Small ribosomal subunit protein uS17</fullName>
    </recommendedName>
    <alternativeName>
        <fullName evidence="2">30S ribosomal protein S17</fullName>
    </alternativeName>
</protein>
<reference key="1">
    <citation type="journal article" date="2005" name="J. Bacteriol.">
        <title>Insights on evolution of virulence and resistance from the complete genome analysis of an early methicillin-resistant Staphylococcus aureus strain and a biofilm-producing methicillin-resistant Staphylococcus epidermidis strain.</title>
        <authorList>
            <person name="Gill S.R."/>
            <person name="Fouts D.E."/>
            <person name="Archer G.L."/>
            <person name="Mongodin E.F."/>
            <person name="DeBoy R.T."/>
            <person name="Ravel J."/>
            <person name="Paulsen I.T."/>
            <person name="Kolonay J.F."/>
            <person name="Brinkac L.M."/>
            <person name="Beanan M.J."/>
            <person name="Dodson R.J."/>
            <person name="Daugherty S.C."/>
            <person name="Madupu R."/>
            <person name="Angiuoli S.V."/>
            <person name="Durkin A.S."/>
            <person name="Haft D.H."/>
            <person name="Vamathevan J.J."/>
            <person name="Khouri H."/>
            <person name="Utterback T.R."/>
            <person name="Lee C."/>
            <person name="Dimitrov G."/>
            <person name="Jiang L."/>
            <person name="Qin H."/>
            <person name="Weidman J."/>
            <person name="Tran K."/>
            <person name="Kang K.H."/>
            <person name="Hance I.R."/>
            <person name="Nelson K.E."/>
            <person name="Fraser C.M."/>
        </authorList>
    </citation>
    <scope>NUCLEOTIDE SEQUENCE [LARGE SCALE GENOMIC DNA]</scope>
    <source>
        <strain>COL</strain>
    </source>
</reference>